<dbReference type="EMBL" id="BC152042">
    <property type="protein sequence ID" value="AAI52043.1"/>
    <property type="status" value="ALT_INIT"/>
    <property type="molecule type" value="mRNA"/>
</dbReference>
<dbReference type="RefSeq" id="NP_001106396.1">
    <property type="nucleotide sequence ID" value="NM_001112925.1"/>
</dbReference>
<dbReference type="SMR" id="A7MC48"/>
<dbReference type="FunCoup" id="A7MC48">
    <property type="interactions" value="33"/>
</dbReference>
<dbReference type="STRING" id="8364.ENSXETP00000053357"/>
<dbReference type="GlyCosmos" id="A7MC48">
    <property type="glycosylation" value="2 sites, No reported glycans"/>
</dbReference>
<dbReference type="GeneID" id="100127547"/>
<dbReference type="KEGG" id="xtr:100127547"/>
<dbReference type="AGR" id="Xenbase:XB-GENE-955578"/>
<dbReference type="CTD" id="729993"/>
<dbReference type="Xenbase" id="XB-GENE-955578">
    <property type="gene designation" value="shisa9"/>
</dbReference>
<dbReference type="InParanoid" id="A7MC48"/>
<dbReference type="OrthoDB" id="9935471at2759"/>
<dbReference type="Proteomes" id="UP000008143">
    <property type="component" value="Chromosome 9"/>
</dbReference>
<dbReference type="Bgee" id="ENSXETG00000034623">
    <property type="expression patterns" value="Expressed in brain and 1 other cell type or tissue"/>
</dbReference>
<dbReference type="GO" id="GO:0032591">
    <property type="term" value="C:dendritic spine membrane"/>
    <property type="evidence" value="ECO:0000250"/>
    <property type="project" value="UniProtKB"/>
</dbReference>
<dbReference type="GO" id="GO:0008328">
    <property type="term" value="C:ionotropic glutamate receptor complex"/>
    <property type="evidence" value="ECO:0000250"/>
    <property type="project" value="UniProtKB"/>
</dbReference>
<dbReference type="GO" id="GO:0045211">
    <property type="term" value="C:postsynaptic membrane"/>
    <property type="evidence" value="ECO:0007669"/>
    <property type="project" value="UniProtKB-KW"/>
</dbReference>
<dbReference type="GO" id="GO:0045202">
    <property type="term" value="C:synapse"/>
    <property type="evidence" value="ECO:0000250"/>
    <property type="project" value="UniProtKB"/>
</dbReference>
<dbReference type="GO" id="GO:0048172">
    <property type="term" value="P:regulation of short-term neuronal synaptic plasticity"/>
    <property type="evidence" value="ECO:0000250"/>
    <property type="project" value="UniProtKB"/>
</dbReference>
<dbReference type="InterPro" id="IPR026910">
    <property type="entry name" value="Shisa"/>
</dbReference>
<dbReference type="InterPro" id="IPR053891">
    <property type="entry name" value="Shisa_N"/>
</dbReference>
<dbReference type="PANTHER" id="PTHR31774:SF1">
    <property type="entry name" value="PROTEIN SHISA-9"/>
    <property type="match status" value="1"/>
</dbReference>
<dbReference type="PANTHER" id="PTHR31774">
    <property type="entry name" value="PROTEIN SHISA-9-RELATED"/>
    <property type="match status" value="1"/>
</dbReference>
<dbReference type="Pfam" id="PF13908">
    <property type="entry name" value="Shisa_N"/>
    <property type="match status" value="1"/>
</dbReference>
<protein>
    <recommendedName>
        <fullName>Protein shisa-9</fullName>
    </recommendedName>
</protein>
<evidence type="ECO:0000250" key="1"/>
<evidence type="ECO:0000255" key="2"/>
<evidence type="ECO:0000305" key="3"/>
<keyword id="KW-1003">Cell membrane</keyword>
<keyword id="KW-0966">Cell projection</keyword>
<keyword id="KW-0325">Glycoprotein</keyword>
<keyword id="KW-0472">Membrane</keyword>
<keyword id="KW-0628">Postsynaptic cell membrane</keyword>
<keyword id="KW-1185">Reference proteome</keyword>
<keyword id="KW-0732">Signal</keyword>
<keyword id="KW-0770">Synapse</keyword>
<keyword id="KW-0812">Transmembrane</keyword>
<keyword id="KW-1133">Transmembrane helix</keyword>
<name>SHSA9_XENTR</name>
<gene>
    <name type="primary">shisa9</name>
</gene>
<accession>A7MC48</accession>
<comment type="function">
    <text evidence="1">Regulator of short-term neuronal synaptic plasticity in the dentate gyrus. Associates with AMPA receptors (ionotropic glutamate receptors) in synaptic spines and promotes AMPA receptor desensitization at excitatory synapses (By similarity).</text>
</comment>
<comment type="subunit">
    <text evidence="1">Component of some AMPA receptors (ionotropic glutamate receptors) complex.</text>
</comment>
<comment type="subcellular location">
    <subcellularLocation>
        <location evidence="1">Cell projection</location>
        <location evidence="1">Dendritic spine membrane</location>
        <topology evidence="1">Single-pass type I membrane protein</topology>
    </subcellularLocation>
    <subcellularLocation>
        <location evidence="1">Synapse</location>
    </subcellularLocation>
</comment>
<comment type="similarity">
    <text evidence="3">Belongs to the shisa family. SHISA9 subfamily.</text>
</comment>
<comment type="sequence caution" evidence="3">
    <conflict type="erroneous initiation">
        <sequence resource="EMBL-CDS" id="AAI52043"/>
    </conflict>
    <text>Extended N-terminus.</text>
</comment>
<proteinExistence type="evidence at transcript level"/>
<feature type="signal peptide" evidence="2">
    <location>
        <begin position="1"/>
        <end position="22"/>
    </location>
</feature>
<feature type="chain" id="PRO_0000394257" description="Protein shisa-9">
    <location>
        <begin position="23"/>
        <end position="390"/>
    </location>
</feature>
<feature type="topological domain" description="Extracellular" evidence="2">
    <location>
        <begin position="23"/>
        <end position="134"/>
    </location>
</feature>
<feature type="transmembrane region" description="Helical" evidence="2">
    <location>
        <begin position="135"/>
        <end position="155"/>
    </location>
</feature>
<feature type="topological domain" description="Cytoplasmic" evidence="2">
    <location>
        <begin position="156"/>
        <end position="390"/>
    </location>
</feature>
<feature type="glycosylation site" description="N-linked (GlcNAc...) asparagine" evidence="2">
    <location>
        <position position="40"/>
    </location>
</feature>
<feature type="glycosylation site" description="N-linked (GlcNAc...) asparagine" evidence="2">
    <location>
        <position position="74"/>
    </location>
</feature>
<sequence length="390" mass="43824">MTGIRAIFYYFLVDLLTLLCWAQGKGGQHFGSTVVVSDVNLSNHGDQGSSEPPQTAEGCRGYFDVMGQWDPPFNCSSGEFLYCCGTCGFRYCCKFKQARLDQNTCTNYDRPVWLQPGKTPPKIDDPSHDPTRDKTNLIVYIICGVVAVMVLVGIFTKLGLEKAHRPQRENMSRALADVMRQQSHCATEHTERDPNLVIHVQHYETMPSRSSANNLHSSKINNVVPTSPHLPQMAHPHSYPTMGQISNPYEQQPPGKELNKYASLKAVAEKGNDDFYSKRRHLAELAAKGSLPLHPVRVDQERSYSPEGGTLKVNGQKAKANKIHTHPLASTYNPDYKTWDHSEHSLRRQAYATKKHCPVESVNEPLQSQNQHFMPSQPYFVTNSKTEVTV</sequence>
<reference key="1">
    <citation type="submission" date="2007-08" db="EMBL/GenBank/DDBJ databases">
        <authorList>
            <consortium name="NIH - Xenopus Gene Collection (XGC) project"/>
        </authorList>
    </citation>
    <scope>NUCLEOTIDE SEQUENCE [LARGE SCALE MRNA]</scope>
    <source>
        <tissue>Brain</tissue>
    </source>
</reference>
<organism>
    <name type="scientific">Xenopus tropicalis</name>
    <name type="common">Western clawed frog</name>
    <name type="synonym">Silurana tropicalis</name>
    <dbReference type="NCBI Taxonomy" id="8364"/>
    <lineage>
        <taxon>Eukaryota</taxon>
        <taxon>Metazoa</taxon>
        <taxon>Chordata</taxon>
        <taxon>Craniata</taxon>
        <taxon>Vertebrata</taxon>
        <taxon>Euteleostomi</taxon>
        <taxon>Amphibia</taxon>
        <taxon>Batrachia</taxon>
        <taxon>Anura</taxon>
        <taxon>Pipoidea</taxon>
        <taxon>Pipidae</taxon>
        <taxon>Xenopodinae</taxon>
        <taxon>Xenopus</taxon>
        <taxon>Silurana</taxon>
    </lineage>
</organism>